<sequence length="212" mass="23258">MFAEYGVLNYWTYLVGAIFIVLVPGPNTLFVLKNSVSSGMKGGYLAACGVFIGDAVLMFLAWAGVATLIKTTPILFNIVRYLGAFYLLYLGSKILYATLKGKNNEAKSDEPQYGAIFKRALILSLTNPKAILFYVSFFVQFIDVNAPHTGISFFILATTLELVSFCYLSFLIISGAFVTQYIRTKKKLAKVGNSLIGLMFVGFAARLATLQS</sequence>
<accession>A7ZMR9</accession>
<dbReference type="EMBL" id="CP000800">
    <property type="protein sequence ID" value="ABV17098.1"/>
    <property type="molecule type" value="Genomic_DNA"/>
</dbReference>
<dbReference type="RefSeq" id="WP_000457202.1">
    <property type="nucleotide sequence ID" value="NC_009801.1"/>
</dbReference>
<dbReference type="SMR" id="A7ZMR9"/>
<dbReference type="GeneID" id="93776046"/>
<dbReference type="KEGG" id="ecw:EcE24377A_2024"/>
<dbReference type="HOGENOM" id="CLU_079569_3_1_6"/>
<dbReference type="Proteomes" id="UP000001122">
    <property type="component" value="Chromosome"/>
</dbReference>
<dbReference type="GO" id="GO:0005886">
    <property type="term" value="C:plasma membrane"/>
    <property type="evidence" value="ECO:0007669"/>
    <property type="project" value="UniProtKB-SubCell"/>
</dbReference>
<dbReference type="GO" id="GO:0015297">
    <property type="term" value="F:antiporter activity"/>
    <property type="evidence" value="ECO:0007669"/>
    <property type="project" value="UniProtKB-KW"/>
</dbReference>
<dbReference type="GO" id="GO:0015190">
    <property type="term" value="F:L-leucine transmembrane transporter activity"/>
    <property type="evidence" value="ECO:0007669"/>
    <property type="project" value="TreeGrafter"/>
</dbReference>
<dbReference type="GO" id="GO:0015820">
    <property type="term" value="P:L-leucine transport"/>
    <property type="evidence" value="ECO:0007669"/>
    <property type="project" value="TreeGrafter"/>
</dbReference>
<dbReference type="InterPro" id="IPR001123">
    <property type="entry name" value="LeuE-type"/>
</dbReference>
<dbReference type="NCBIfam" id="NF008201">
    <property type="entry name" value="PRK10958.1"/>
    <property type="match status" value="1"/>
</dbReference>
<dbReference type="PANTHER" id="PTHR30086">
    <property type="entry name" value="ARGININE EXPORTER PROTEIN ARGO"/>
    <property type="match status" value="1"/>
</dbReference>
<dbReference type="PANTHER" id="PTHR30086:SF15">
    <property type="entry name" value="LEUCINE EFFLUX PROTEIN"/>
    <property type="match status" value="1"/>
</dbReference>
<dbReference type="Pfam" id="PF01810">
    <property type="entry name" value="LysE"/>
    <property type="match status" value="1"/>
</dbReference>
<dbReference type="PIRSF" id="PIRSF006324">
    <property type="entry name" value="LeuE"/>
    <property type="match status" value="1"/>
</dbReference>
<name>LEUE_ECO24</name>
<reference key="1">
    <citation type="journal article" date="2008" name="J. Bacteriol.">
        <title>The pangenome structure of Escherichia coli: comparative genomic analysis of E. coli commensal and pathogenic isolates.</title>
        <authorList>
            <person name="Rasko D.A."/>
            <person name="Rosovitz M.J."/>
            <person name="Myers G.S.A."/>
            <person name="Mongodin E.F."/>
            <person name="Fricke W.F."/>
            <person name="Gajer P."/>
            <person name="Crabtree J."/>
            <person name="Sebaihia M."/>
            <person name="Thomson N.R."/>
            <person name="Chaudhuri R."/>
            <person name="Henderson I.R."/>
            <person name="Sperandio V."/>
            <person name="Ravel J."/>
        </authorList>
    </citation>
    <scope>NUCLEOTIDE SEQUENCE [LARGE SCALE GENOMIC DNA]</scope>
    <source>
        <strain>E24377A / ETEC</strain>
    </source>
</reference>
<keyword id="KW-0029">Amino-acid transport</keyword>
<keyword id="KW-0050">Antiport</keyword>
<keyword id="KW-0997">Cell inner membrane</keyword>
<keyword id="KW-1003">Cell membrane</keyword>
<keyword id="KW-0472">Membrane</keyword>
<keyword id="KW-1185">Reference proteome</keyword>
<keyword id="KW-0812">Transmembrane</keyword>
<keyword id="KW-1133">Transmembrane helix</keyword>
<keyword id="KW-0813">Transport</keyword>
<comment type="function">
    <text evidence="1">Exporter of leucine.</text>
</comment>
<comment type="catalytic activity">
    <reaction evidence="1">
        <text>L-leucine(in) + H(+)(out) = L-leucine(out) + H(+)(in)</text>
        <dbReference type="Rhea" id="RHEA:28731"/>
        <dbReference type="ChEBI" id="CHEBI:15378"/>
        <dbReference type="ChEBI" id="CHEBI:57427"/>
    </reaction>
    <physiologicalReaction direction="left-to-right" evidence="1">
        <dbReference type="Rhea" id="RHEA:28732"/>
    </physiologicalReaction>
</comment>
<comment type="subcellular location">
    <subcellularLocation>
        <location evidence="1">Cell inner membrane</location>
        <topology evidence="2">Multi-pass membrane protein</topology>
    </subcellularLocation>
</comment>
<comment type="similarity">
    <text evidence="3">Belongs to the Rht family.</text>
</comment>
<organism>
    <name type="scientific">Escherichia coli O139:H28 (strain E24377A / ETEC)</name>
    <dbReference type="NCBI Taxonomy" id="331111"/>
    <lineage>
        <taxon>Bacteria</taxon>
        <taxon>Pseudomonadati</taxon>
        <taxon>Pseudomonadota</taxon>
        <taxon>Gammaproteobacteria</taxon>
        <taxon>Enterobacterales</taxon>
        <taxon>Enterobacteriaceae</taxon>
        <taxon>Escherichia</taxon>
    </lineage>
</organism>
<evidence type="ECO:0000250" key="1">
    <source>
        <dbReference type="UniProtKB" id="P76249"/>
    </source>
</evidence>
<evidence type="ECO:0000255" key="2"/>
<evidence type="ECO:0000305" key="3"/>
<proteinExistence type="inferred from homology"/>
<gene>
    <name type="primary">leuE</name>
    <name type="ordered locus">EcE24377A_2024</name>
</gene>
<protein>
    <recommendedName>
        <fullName evidence="1">Leucine efflux protein</fullName>
    </recommendedName>
</protein>
<feature type="chain" id="PRO_0000316799" description="Leucine efflux protein">
    <location>
        <begin position="1"/>
        <end position="212"/>
    </location>
</feature>
<feature type="transmembrane region" description="Helical" evidence="2">
    <location>
        <begin position="12"/>
        <end position="32"/>
    </location>
</feature>
<feature type="transmembrane region" description="Helical" evidence="2">
    <location>
        <begin position="49"/>
        <end position="69"/>
    </location>
</feature>
<feature type="transmembrane region" description="Helical" evidence="2">
    <location>
        <begin position="71"/>
        <end position="91"/>
    </location>
</feature>
<feature type="transmembrane region" description="Helical" evidence="2">
    <location>
        <begin position="122"/>
        <end position="142"/>
    </location>
</feature>
<feature type="transmembrane region" description="Helical" evidence="2">
    <location>
        <begin position="153"/>
        <end position="173"/>
    </location>
</feature>
<feature type="transmembrane region" description="Helical" evidence="2">
    <location>
        <begin position="188"/>
        <end position="208"/>
    </location>
</feature>